<accession>Q9Z220</accession>
<dbReference type="EMBL" id="AF092091">
    <property type="protein sequence ID" value="AAC72234.1"/>
    <property type="status" value="ALT_INIT"/>
    <property type="molecule type" value="mRNA"/>
</dbReference>
<dbReference type="RefSeq" id="NP_001025193.1">
    <property type="nucleotide sequence ID" value="NM_001030022.1"/>
</dbReference>
<dbReference type="SMR" id="Q9Z220"/>
<dbReference type="FunCoup" id="Q9Z220">
    <property type="interactions" value="422"/>
</dbReference>
<dbReference type="STRING" id="10116.ENSRNOP00000069242"/>
<dbReference type="iPTMnet" id="Q9Z220"/>
<dbReference type="PhosphoSitePlus" id="Q9Z220"/>
<dbReference type="UCSC" id="RGD:621142">
    <property type="organism name" value="rat"/>
</dbReference>
<dbReference type="AGR" id="RGD:621142"/>
<dbReference type="RGD" id="621142">
    <property type="gene designation" value="Tsga10"/>
</dbReference>
<dbReference type="eggNOG" id="ENOG502RJHC">
    <property type="taxonomic scope" value="Eukaryota"/>
</dbReference>
<dbReference type="InParanoid" id="Q9Z220"/>
<dbReference type="PhylomeDB" id="Q9Z220"/>
<dbReference type="PRO" id="PR:Q9Z220"/>
<dbReference type="Proteomes" id="UP000002494">
    <property type="component" value="Unplaced"/>
</dbReference>
<dbReference type="GO" id="GO:0005814">
    <property type="term" value="C:centriole"/>
    <property type="evidence" value="ECO:0007669"/>
    <property type="project" value="UniProtKB-SubCell"/>
</dbReference>
<dbReference type="GO" id="GO:0005737">
    <property type="term" value="C:cytoplasm"/>
    <property type="evidence" value="ECO:0000314"/>
    <property type="project" value="MGI"/>
</dbReference>
<dbReference type="GO" id="GO:0031514">
    <property type="term" value="C:motile cilium"/>
    <property type="evidence" value="ECO:0000266"/>
    <property type="project" value="RGD"/>
</dbReference>
<dbReference type="GO" id="GO:0043005">
    <property type="term" value="C:neuron projection"/>
    <property type="evidence" value="ECO:0000266"/>
    <property type="project" value="RGD"/>
</dbReference>
<dbReference type="GO" id="GO:0035686">
    <property type="term" value="C:sperm fibrous sheath"/>
    <property type="evidence" value="ECO:0000266"/>
    <property type="project" value="RGD"/>
</dbReference>
<dbReference type="GO" id="GO:0097228">
    <property type="term" value="C:sperm principal piece"/>
    <property type="evidence" value="ECO:0000266"/>
    <property type="project" value="RGD"/>
</dbReference>
<dbReference type="GO" id="GO:0005198">
    <property type="term" value="F:structural molecule activity"/>
    <property type="evidence" value="ECO:0000314"/>
    <property type="project" value="MGI"/>
</dbReference>
<dbReference type="GO" id="GO:0030031">
    <property type="term" value="P:cell projection assembly"/>
    <property type="evidence" value="ECO:0000266"/>
    <property type="project" value="RGD"/>
</dbReference>
<dbReference type="InterPro" id="IPR051877">
    <property type="entry name" value="Centriole_BasalBody_StrucProt"/>
</dbReference>
<dbReference type="PANTHER" id="PTHR20544">
    <property type="entry name" value="CENTROSOMAL PROTEIN CEP135"/>
    <property type="match status" value="1"/>
</dbReference>
<dbReference type="PANTHER" id="PTHR20544:SF2">
    <property type="entry name" value="TESTIS SPECIFIC 10"/>
    <property type="match status" value="1"/>
</dbReference>
<dbReference type="SUPFAM" id="SSF57997">
    <property type="entry name" value="Tropomyosin"/>
    <property type="match status" value="1"/>
</dbReference>
<name>TSG10_RAT</name>
<sequence>MMRNRSKSPRRPSPTSRAANCDVDLLKSTARDREELKCMLEKYERHLAEIQGNVKVLTSVRDKTFLLYEQAQEEIARLRREMMKSCQSPKSTTAHAILRRVETERDVAFTDLRRMTTARDSLRERLKIAQAFNEKAHLEQRIEELECTVHNLDDERMEQMSNMTLMKETITIVEKEMKSLARKAMDTESELGRQKAENNSLRLLYENTEKDLSDTQRHLAKKKYELQLTQEKIMCLDEKIDNFTRQNIAQREEISILGATLNDLAKEKECLQTCLDKKSENIASLGESLAMKEKTISGMKNIIAEMEQASRQSTEALIMCEQDISRMRRQLDETNDELGQIARERDILAHENDNLQEQFAKVKQENQALSKKLNDTHNELSDIKQKVQDTNLEVNKLKNILKSEESTNLEVNKLKNILKSEESENRQIMEQLRKANEDAENWENKARQLEAENNTLKLELITAEAEGNRLKEKVDALNREVEQHLNAERSYKSQIATLHKSLVKMEEELQKVQFEKVSALADLSSTRELCIKLDSSKELLNRQLVAKDQEIEMMENELDSARSEIELLRSQMTNERISMQNLEALLVANRDKEYQSQIALQEKESEIQLLKEHLCLAENKMAIQSRDVAQFRNVVTQLEADLDITKRQLGTERFERERAVQELRRQNYSSNAYHLGSMKPNTKCHSPERAHHRSPDRDLDRSLEENLCYRDF</sequence>
<evidence type="ECO:0000250" key="1"/>
<evidence type="ECO:0000250" key="2">
    <source>
        <dbReference type="UniProtKB" id="Q6NY15"/>
    </source>
</evidence>
<evidence type="ECO:0000250" key="3">
    <source>
        <dbReference type="UniProtKB" id="Q9BZW7"/>
    </source>
</evidence>
<evidence type="ECO:0000256" key="4">
    <source>
        <dbReference type="SAM" id="MobiDB-lite"/>
    </source>
</evidence>
<evidence type="ECO:0000269" key="5">
    <source>
    </source>
</evidence>
<evidence type="ECO:0000269" key="6">
    <source>
    </source>
</evidence>
<evidence type="ECO:0000305" key="7"/>
<evidence type="ECO:0007744" key="8">
    <source>
    </source>
</evidence>
<comment type="function">
    <text evidence="2 3">Plays a role in spermatogenesis (By similarity). When overexpressed, prevents nuclear localization of HIF1A (By similarity).</text>
</comment>
<comment type="subunit">
    <text evidence="2">Interacts with HIF1A.</text>
</comment>
<comment type="subcellular location">
    <subcellularLocation>
        <location evidence="5 6">Cytoplasm</location>
    </subcellularLocation>
    <subcellularLocation>
        <location evidence="3">Cytoplasm</location>
        <location evidence="3">Cytoskeleton</location>
        <location evidence="3">Microtubule organizing center</location>
        <location evidence="3">Centrosome</location>
        <location evidence="3">Centriole</location>
    </subcellularLocation>
    <text evidence="3 5 6">In mature spermatozoa, localizes to the centriole and midpiece (By similarity). The 27-kDa N-terminal fragment associates with the fibrous sheath in mature spermatozoa and localizes to the principal piece of sperm tail, while the 55-kDa fragment localizes to the midpiece (PubMed:14585816). Detected in the cytoplasm of almost all spermatogonial cells within the seminiferous tubules (PubMed:16643851).</text>
</comment>
<comment type="tissue specificity">
    <text evidence="5 6">Expressed in testis, predominantly in elongated spermatids (at protein level) (PubMed:14585816, PubMed:16643851). Detected in spermatocytes only at the mRNA, but not at the protein level (PubMed:14585816).</text>
</comment>
<comment type="developmental stage">
    <text evidence="5">Becomes detectable in testis between postnatal days 15 and 21 and expression levels remain high in the adult. Not detected in fetal testis.</text>
</comment>
<comment type="PTM">
    <text evidence="5">Processed into N-terminal 27-kDa and C-terminal 55-kDa fragments.</text>
</comment>
<comment type="similarity">
    <text evidence="7">Belongs to the CEP135/TSGA10 family.</text>
</comment>
<comment type="sequence caution" evidence="7">
    <conflict type="erroneous initiation">
        <sequence resource="EMBL-CDS" id="AAC72234"/>
    </conflict>
</comment>
<reference key="1">
    <citation type="submission" date="1998-09" db="EMBL/GenBank/DDBJ databases">
        <authorList>
            <person name="Petersen C."/>
            <person name="Hoyer-Fender S."/>
        </authorList>
    </citation>
    <scope>NUCLEOTIDE SEQUENCE [MRNA]</scope>
    <source>
        <tissue>Testis</tissue>
    </source>
</reference>
<reference key="2">
    <citation type="journal article" date="2004" name="Biol. Reprod.">
        <title>Tsga10 encodes a 65-kilodalton protein that is processed to the 27-kilodalton fibrous sheath protein.</title>
        <authorList>
            <person name="Modarressi M.H."/>
            <person name="Behnam B."/>
            <person name="Cheng M."/>
            <person name="Taylor K.E."/>
            <person name="Wolfe J."/>
            <person name="van der Hoorn F.A."/>
        </authorList>
    </citation>
    <scope>SUBCELLULAR LOCATION</scope>
    <scope>TISSUE SPECIFICITY</scope>
    <scope>DEVELOPMENTAL STAGE</scope>
</reference>
<reference key="3">
    <citation type="journal article" date="2006" name="Biochem. Biophys. Res. Commun.">
        <title>Expression of Tsga10 sperm tail protein in embryogenesis and neural development: from cilium to cell division.</title>
        <authorList>
            <person name="Behnam B."/>
            <person name="Modarressi M.H."/>
            <person name="Conti V."/>
            <person name="Taylor K.E."/>
            <person name="Puliti A."/>
            <person name="Wolfe J."/>
        </authorList>
    </citation>
    <scope>SUBCELLULAR LOCATION</scope>
    <scope>TISSUE SPECIFICITY</scope>
</reference>
<reference key="4">
    <citation type="journal article" date="2012" name="Nat. Commun.">
        <title>Quantitative maps of protein phosphorylation sites across 14 different rat organs and tissues.</title>
        <authorList>
            <person name="Lundby A."/>
            <person name="Secher A."/>
            <person name="Lage K."/>
            <person name="Nordsborg N.B."/>
            <person name="Dmytriyev A."/>
            <person name="Lundby C."/>
            <person name="Olsen J.V."/>
        </authorList>
    </citation>
    <scope>PHOSPHORYLATION [LARGE SCALE ANALYSIS] AT SER-702</scope>
    <scope>IDENTIFICATION BY MASS SPECTROMETRY [LARGE SCALE ANALYSIS]</scope>
</reference>
<keyword id="KW-0963">Cytoplasm</keyword>
<keyword id="KW-0206">Cytoskeleton</keyword>
<keyword id="KW-0597">Phosphoprotein</keyword>
<keyword id="KW-1185">Reference proteome</keyword>
<feature type="chain" id="PRO_0000307127" description="Testis-specific gene 10 protein">
    <location>
        <begin position="1"/>
        <end position="712"/>
    </location>
</feature>
<feature type="region of interest" description="Interaction with HIF1A" evidence="1">
    <location>
        <begin position="571"/>
        <end position="703"/>
    </location>
</feature>
<feature type="region of interest" description="Disordered" evidence="4">
    <location>
        <begin position="673"/>
        <end position="699"/>
    </location>
</feature>
<feature type="compositionally biased region" description="Basic and acidic residues" evidence="4">
    <location>
        <begin position="685"/>
        <end position="699"/>
    </location>
</feature>
<feature type="modified residue" description="Phosphoserine" evidence="3">
    <location>
        <position position="161"/>
    </location>
</feature>
<feature type="modified residue" description="Phosphoserine" evidence="8">
    <location>
        <position position="702"/>
    </location>
</feature>
<gene>
    <name type="primary">Tsga10</name>
</gene>
<organism>
    <name type="scientific">Rattus norvegicus</name>
    <name type="common">Rat</name>
    <dbReference type="NCBI Taxonomy" id="10116"/>
    <lineage>
        <taxon>Eukaryota</taxon>
        <taxon>Metazoa</taxon>
        <taxon>Chordata</taxon>
        <taxon>Craniata</taxon>
        <taxon>Vertebrata</taxon>
        <taxon>Euteleostomi</taxon>
        <taxon>Mammalia</taxon>
        <taxon>Eutheria</taxon>
        <taxon>Euarchontoglires</taxon>
        <taxon>Glires</taxon>
        <taxon>Rodentia</taxon>
        <taxon>Myomorpha</taxon>
        <taxon>Muroidea</taxon>
        <taxon>Muridae</taxon>
        <taxon>Murinae</taxon>
        <taxon>Rattus</taxon>
    </lineage>
</organism>
<proteinExistence type="evidence at protein level"/>
<protein>
    <recommendedName>
        <fullName>Testis-specific gene 10 protein</fullName>
    </recommendedName>
    <alternativeName>
        <fullName>Cp431</fullName>
    </alternativeName>
</protein>